<keyword id="KW-0002">3D-structure</keyword>
<keyword id="KW-0025">Alternative splicing</keyword>
<keyword id="KW-0539">Nucleus</keyword>
<keyword id="KW-1185">Reference proteome</keyword>
<keyword id="KW-0677">Repeat</keyword>
<keyword id="KW-0804">Transcription</keyword>
<keyword id="KW-0805">Transcription regulation</keyword>
<feature type="chain" id="PRO_0000153722" description="Interferon-activable protein 211">
    <location>
        <begin position="1"/>
        <end position="425"/>
    </location>
</feature>
<feature type="domain" description="Pyrin" evidence="2">
    <location>
        <begin position="1"/>
        <end position="88"/>
    </location>
</feature>
<feature type="repeat" description="1">
    <location>
        <begin position="129"/>
        <end position="135"/>
    </location>
</feature>
<feature type="repeat" description="2">
    <location>
        <begin position="136"/>
        <end position="142"/>
    </location>
</feature>
<feature type="repeat" description="3">
    <location>
        <begin position="143"/>
        <end position="149"/>
    </location>
</feature>
<feature type="repeat" description="4">
    <location>
        <begin position="150"/>
        <end position="156"/>
    </location>
</feature>
<feature type="domain" description="HIN-200" evidence="3">
    <location>
        <begin position="213"/>
        <end position="413"/>
    </location>
</feature>
<feature type="region of interest" description="Disordered" evidence="4">
    <location>
        <begin position="86"/>
        <end position="223"/>
    </location>
</feature>
<feature type="region of interest" description="4 X 7 AA tandem repeats of T-S-T-A-Q-A-[GR]">
    <location>
        <begin position="129"/>
        <end position="177"/>
    </location>
</feature>
<feature type="compositionally biased region" description="Basic and acidic residues" evidence="4">
    <location>
        <begin position="86"/>
        <end position="99"/>
    </location>
</feature>
<feature type="compositionally biased region" description="Low complexity" evidence="4">
    <location>
        <begin position="122"/>
        <end position="153"/>
    </location>
</feature>
<feature type="compositionally biased region" description="Basic and acidic residues" evidence="4">
    <location>
        <begin position="159"/>
        <end position="176"/>
    </location>
</feature>
<feature type="compositionally biased region" description="Low complexity" evidence="4">
    <location>
        <begin position="190"/>
        <end position="206"/>
    </location>
</feature>
<feature type="compositionally biased region" description="Polar residues" evidence="4">
    <location>
        <begin position="207"/>
        <end position="218"/>
    </location>
</feature>
<feature type="splice variant" id="VSP_058589" description="In isoform 2.">
    <location>
        <begin position="89"/>
        <end position="90"/>
    </location>
</feature>
<feature type="sequence conflict" description="In Ref. 3; BAE38635." evidence="12" ref="3">
    <original>G</original>
    <variation>R</variation>
    <location>
        <position position="142"/>
    </location>
</feature>
<feature type="sequence conflict" description="In Ref. 3; BAE38635." evidence="12" ref="3">
    <original>A</original>
    <variation>E</variation>
    <location>
        <position position="148"/>
    </location>
</feature>
<feature type="sequence conflict" description="In Ref. 3; BAE31415." evidence="12" ref="3">
    <original>K</original>
    <variation>E</variation>
    <location>
        <position position="276"/>
    </location>
</feature>
<feature type="sequence conflict" description="In Ref. 3; BAE38635." evidence="12" ref="3">
    <original>F</original>
    <variation>S</variation>
    <location>
        <position position="277"/>
    </location>
</feature>
<feature type="sequence conflict" description="In Ref. 3; BAE38635." evidence="12" ref="3">
    <original>K</original>
    <variation>N</variation>
    <location>
        <position position="350"/>
    </location>
</feature>
<feature type="sequence conflict" description="In Ref. 1; AAB26880." evidence="12" ref="1">
    <original>S</original>
    <variation>R</variation>
    <location>
        <position position="366"/>
    </location>
</feature>
<feature type="turn" evidence="14">
    <location>
        <begin position="10"/>
        <end position="16"/>
    </location>
</feature>
<feature type="helix" evidence="14">
    <location>
        <begin position="19"/>
        <end position="30"/>
    </location>
</feature>
<feature type="turn" evidence="14">
    <location>
        <begin position="31"/>
        <end position="33"/>
    </location>
</feature>
<feature type="strand" evidence="14">
    <location>
        <begin position="40"/>
        <end position="42"/>
    </location>
</feature>
<feature type="helix" evidence="14">
    <location>
        <begin position="45"/>
        <end position="55"/>
    </location>
</feature>
<feature type="turn" evidence="14">
    <location>
        <begin position="57"/>
        <end position="61"/>
    </location>
</feature>
<feature type="helix" evidence="14">
    <location>
        <begin position="62"/>
        <end position="71"/>
    </location>
</feature>
<feature type="turn" evidence="14">
    <location>
        <begin position="73"/>
        <end position="75"/>
    </location>
</feature>
<feature type="helix" evidence="14">
    <location>
        <begin position="76"/>
        <end position="86"/>
    </location>
</feature>
<protein>
    <recommendedName>
        <fullName evidence="12">Interferon-activable protein 211</fullName>
    </recommendedName>
    <alternativeName>
        <fullName evidence="11">Interferon-activable protein 205-B</fullName>
        <shortName>Ifi-205-B</shortName>
    </alternativeName>
    <alternativeName>
        <fullName>Interferon-inducible protein p205-B</fullName>
    </alternativeName>
    <alternativeName>
        <fullName evidence="1">Myeloid cell nuclear differentiation antigen</fullName>
    </alternativeName>
    <alternativeName>
        <fullName evidence="10">Protein D3</fullName>
    </alternativeName>
</protein>
<accession>P0DOV1</accession>
<accession>B7ZNS3</accession>
<accession>P15092</accession>
<accession>Q08619</accession>
<accession>Q3TM07</accession>
<accession>Q3U776</accession>
<accession>Q3U7F4</accession>
<accession>Q3U7K5</accession>
<accession>Q3UCH9</accession>
<accession>Q8C4X3</accession>
<accession>Q921V9</accession>
<name>IFI5B_MOUSE</name>
<evidence type="ECO:0000250" key="1">
    <source>
        <dbReference type="UniProtKB" id="P41218"/>
    </source>
</evidence>
<evidence type="ECO:0000255" key="2">
    <source>
        <dbReference type="PROSITE-ProRule" id="PRU00061"/>
    </source>
</evidence>
<evidence type="ECO:0000255" key="3">
    <source>
        <dbReference type="PROSITE-ProRule" id="PRU00106"/>
    </source>
</evidence>
<evidence type="ECO:0000256" key="4">
    <source>
        <dbReference type="SAM" id="MobiDB-lite"/>
    </source>
</evidence>
<evidence type="ECO:0000269" key="5">
    <source>
    </source>
</evidence>
<evidence type="ECO:0000269" key="6">
    <source>
    </source>
</evidence>
<evidence type="ECO:0000269" key="7">
    <source>
    </source>
</evidence>
<evidence type="ECO:0000303" key="8">
    <source>
    </source>
</evidence>
<evidence type="ECO:0000303" key="9">
    <source>
    </source>
</evidence>
<evidence type="ECO:0000303" key="10">
    <source>
    </source>
</evidence>
<evidence type="ECO:0000303" key="11">
    <source ref="6"/>
</evidence>
<evidence type="ECO:0000305" key="12"/>
<evidence type="ECO:0000312" key="13">
    <source>
        <dbReference type="MGI" id="MGI:3041120"/>
    </source>
</evidence>
<evidence type="ECO:0007829" key="14">
    <source>
        <dbReference type="PDB" id="2YU0"/>
    </source>
</evidence>
<organism>
    <name type="scientific">Mus musculus</name>
    <name type="common">Mouse</name>
    <dbReference type="NCBI Taxonomy" id="10090"/>
    <lineage>
        <taxon>Eukaryota</taxon>
        <taxon>Metazoa</taxon>
        <taxon>Chordata</taxon>
        <taxon>Craniata</taxon>
        <taxon>Vertebrata</taxon>
        <taxon>Euteleostomi</taxon>
        <taxon>Mammalia</taxon>
        <taxon>Eutheria</taxon>
        <taxon>Euarchontoglires</taxon>
        <taxon>Glires</taxon>
        <taxon>Rodentia</taxon>
        <taxon>Myomorpha</taxon>
        <taxon>Muroidea</taxon>
        <taxon>Muridae</taxon>
        <taxon>Murinae</taxon>
        <taxon>Mus</taxon>
        <taxon>Mus</taxon>
    </lineage>
</organism>
<reference key="1">
    <citation type="journal article" date="1993" name="J. Leukoc. Biol.">
        <title>A lipopolysaccharide-inducible macrophage gene (D3) is a new member of an interferon-inducible gene cluster and is selectively expressed in mononuclear phagocytes.</title>
        <authorList>
            <person name="Tannenbaum C.S."/>
            <person name="Major J."/>
            <person name="Ohmori Y."/>
            <person name="Hamilton T.A."/>
        </authorList>
    </citation>
    <scope>NUCLEOTIDE SEQUENCE [MRNA] (ISOFORM 1)</scope>
    <scope>TISSUE SPECIFICITY</scope>
    <scope>INDUCTION BY LIPOPOLYSACCHARIDES</scope>
    <source>
        <tissue>Macrophage</tissue>
    </source>
</reference>
<reference key="2">
    <citation type="journal article" date="2004" name="Stem Cells">
        <title>Inhibition of growth by p205: a nuclear protein and putative tumor suppressor expressed during myeloid cell differentiation.</title>
        <authorList>
            <person name="Dermott J.M."/>
            <person name="Gooya J.M."/>
            <person name="Asefa B."/>
            <person name="Weiler S.R."/>
            <person name="Smith M."/>
            <person name="Keller J.R."/>
        </authorList>
    </citation>
    <scope>NUCLEOTIDE SEQUENCE [MRNA] (ISOFORM 1)</scope>
    <scope>FUNCTION</scope>
    <scope>SUBCELLULAR LOCATION</scope>
</reference>
<reference key="3">
    <citation type="journal article" date="2005" name="Science">
        <title>The transcriptional landscape of the mammalian genome.</title>
        <authorList>
            <person name="Carninci P."/>
            <person name="Kasukawa T."/>
            <person name="Katayama S."/>
            <person name="Gough J."/>
            <person name="Frith M.C."/>
            <person name="Maeda N."/>
            <person name="Oyama R."/>
            <person name="Ravasi T."/>
            <person name="Lenhard B."/>
            <person name="Wells C."/>
            <person name="Kodzius R."/>
            <person name="Shimokawa K."/>
            <person name="Bajic V.B."/>
            <person name="Brenner S.E."/>
            <person name="Batalov S."/>
            <person name="Forrest A.R."/>
            <person name="Zavolan M."/>
            <person name="Davis M.J."/>
            <person name="Wilming L.G."/>
            <person name="Aidinis V."/>
            <person name="Allen J.E."/>
            <person name="Ambesi-Impiombato A."/>
            <person name="Apweiler R."/>
            <person name="Aturaliya R.N."/>
            <person name="Bailey T.L."/>
            <person name="Bansal M."/>
            <person name="Baxter L."/>
            <person name="Beisel K.W."/>
            <person name="Bersano T."/>
            <person name="Bono H."/>
            <person name="Chalk A.M."/>
            <person name="Chiu K.P."/>
            <person name="Choudhary V."/>
            <person name="Christoffels A."/>
            <person name="Clutterbuck D.R."/>
            <person name="Crowe M.L."/>
            <person name="Dalla E."/>
            <person name="Dalrymple B.P."/>
            <person name="de Bono B."/>
            <person name="Della Gatta G."/>
            <person name="di Bernardo D."/>
            <person name="Down T."/>
            <person name="Engstrom P."/>
            <person name="Fagiolini M."/>
            <person name="Faulkner G."/>
            <person name="Fletcher C.F."/>
            <person name="Fukushima T."/>
            <person name="Furuno M."/>
            <person name="Futaki S."/>
            <person name="Gariboldi M."/>
            <person name="Georgii-Hemming P."/>
            <person name="Gingeras T.R."/>
            <person name="Gojobori T."/>
            <person name="Green R.E."/>
            <person name="Gustincich S."/>
            <person name="Harbers M."/>
            <person name="Hayashi Y."/>
            <person name="Hensch T.K."/>
            <person name="Hirokawa N."/>
            <person name="Hill D."/>
            <person name="Huminiecki L."/>
            <person name="Iacono M."/>
            <person name="Ikeo K."/>
            <person name="Iwama A."/>
            <person name="Ishikawa T."/>
            <person name="Jakt M."/>
            <person name="Kanapin A."/>
            <person name="Katoh M."/>
            <person name="Kawasawa Y."/>
            <person name="Kelso J."/>
            <person name="Kitamura H."/>
            <person name="Kitano H."/>
            <person name="Kollias G."/>
            <person name="Krishnan S.P."/>
            <person name="Kruger A."/>
            <person name="Kummerfeld S.K."/>
            <person name="Kurochkin I.V."/>
            <person name="Lareau L.F."/>
            <person name="Lazarevic D."/>
            <person name="Lipovich L."/>
            <person name="Liu J."/>
            <person name="Liuni S."/>
            <person name="McWilliam S."/>
            <person name="Madan Babu M."/>
            <person name="Madera M."/>
            <person name="Marchionni L."/>
            <person name="Matsuda H."/>
            <person name="Matsuzawa S."/>
            <person name="Miki H."/>
            <person name="Mignone F."/>
            <person name="Miyake S."/>
            <person name="Morris K."/>
            <person name="Mottagui-Tabar S."/>
            <person name="Mulder N."/>
            <person name="Nakano N."/>
            <person name="Nakauchi H."/>
            <person name="Ng P."/>
            <person name="Nilsson R."/>
            <person name="Nishiguchi S."/>
            <person name="Nishikawa S."/>
            <person name="Nori F."/>
            <person name="Ohara O."/>
            <person name="Okazaki Y."/>
            <person name="Orlando V."/>
            <person name="Pang K.C."/>
            <person name="Pavan W.J."/>
            <person name="Pavesi G."/>
            <person name="Pesole G."/>
            <person name="Petrovsky N."/>
            <person name="Piazza S."/>
            <person name="Reed J."/>
            <person name="Reid J.F."/>
            <person name="Ring B.Z."/>
            <person name="Ringwald M."/>
            <person name="Rost B."/>
            <person name="Ruan Y."/>
            <person name="Salzberg S.L."/>
            <person name="Sandelin A."/>
            <person name="Schneider C."/>
            <person name="Schoenbach C."/>
            <person name="Sekiguchi K."/>
            <person name="Semple C.A."/>
            <person name="Seno S."/>
            <person name="Sessa L."/>
            <person name="Sheng Y."/>
            <person name="Shibata Y."/>
            <person name="Shimada H."/>
            <person name="Shimada K."/>
            <person name="Silva D."/>
            <person name="Sinclair B."/>
            <person name="Sperling S."/>
            <person name="Stupka E."/>
            <person name="Sugiura K."/>
            <person name="Sultana R."/>
            <person name="Takenaka Y."/>
            <person name="Taki K."/>
            <person name="Tammoja K."/>
            <person name="Tan S.L."/>
            <person name="Tang S."/>
            <person name="Taylor M.S."/>
            <person name="Tegner J."/>
            <person name="Teichmann S.A."/>
            <person name="Ueda H.R."/>
            <person name="van Nimwegen E."/>
            <person name="Verardo R."/>
            <person name="Wei C.L."/>
            <person name="Yagi K."/>
            <person name="Yamanishi H."/>
            <person name="Zabarovsky E."/>
            <person name="Zhu S."/>
            <person name="Zimmer A."/>
            <person name="Hide W."/>
            <person name="Bult C."/>
            <person name="Grimmond S.M."/>
            <person name="Teasdale R.D."/>
            <person name="Liu E.T."/>
            <person name="Brusic V."/>
            <person name="Quackenbush J."/>
            <person name="Wahlestedt C."/>
            <person name="Mattick J.S."/>
            <person name="Hume D.A."/>
            <person name="Kai C."/>
            <person name="Sasaki D."/>
            <person name="Tomaru Y."/>
            <person name="Fukuda S."/>
            <person name="Kanamori-Katayama M."/>
            <person name="Suzuki M."/>
            <person name="Aoki J."/>
            <person name="Arakawa T."/>
            <person name="Iida J."/>
            <person name="Imamura K."/>
            <person name="Itoh M."/>
            <person name="Kato T."/>
            <person name="Kawaji H."/>
            <person name="Kawagashira N."/>
            <person name="Kawashima T."/>
            <person name="Kojima M."/>
            <person name="Kondo S."/>
            <person name="Konno H."/>
            <person name="Nakano K."/>
            <person name="Ninomiya N."/>
            <person name="Nishio T."/>
            <person name="Okada M."/>
            <person name="Plessy C."/>
            <person name="Shibata K."/>
            <person name="Shiraki T."/>
            <person name="Suzuki S."/>
            <person name="Tagami M."/>
            <person name="Waki K."/>
            <person name="Watahiki A."/>
            <person name="Okamura-Oho Y."/>
            <person name="Suzuki H."/>
            <person name="Kawai J."/>
            <person name="Hayashizaki Y."/>
        </authorList>
    </citation>
    <scope>NUCLEOTIDE SEQUENCE [LARGE SCALE MRNA] (ISOFORM 1)</scope>
    <source>
        <strain>C57BL/6J</strain>
        <tissue>Bone marrow macrophage</tissue>
        <tissue>Cerebellum</tissue>
        <tissue>Mammary gland</tissue>
    </source>
</reference>
<reference key="4">
    <citation type="journal article" date="2004" name="Genome Res.">
        <title>The status, quality, and expansion of the NIH full-length cDNA project: the Mammalian Gene Collection (MGC).</title>
        <authorList>
            <consortium name="The MGC Project Team"/>
        </authorList>
    </citation>
    <scope>NUCLEOTIDE SEQUENCE [LARGE SCALE MRNA] (ISOFORMS 1 AND 2)</scope>
</reference>
<reference key="5">
    <citation type="journal article" date="2006" name="FEBS Lett.">
        <title>p205, a potential tumor suppressor, inhibits cell proliferation via multiple pathways of cell cycle regulation.</title>
        <authorList>
            <person name="Asefa B."/>
            <person name="Dermott J.M."/>
            <person name="Kaldis P."/>
            <person name="Stefanisko K."/>
            <person name="Garfinkel D.J."/>
            <person name="Keller J.R."/>
        </authorList>
    </citation>
    <scope>FUNCTION</scope>
    <scope>INTERACTION WITH HOXB2</scope>
</reference>
<reference key="6">
    <citation type="submission" date="2008-02" db="PDB data bank">
        <title>Solution structures of the PAAD_DAPIN domain of Mus musculus interferon-activatable protein 205.</title>
        <authorList>
            <consortium name="RIKEN structural genomics initiative (RSGI)"/>
        </authorList>
    </citation>
    <scope>STRUCTURE BY NMR OF 8-88</scope>
</reference>
<sequence length="425" mass="46977">MVNEYKRIVLLRGLECINKHYFSLFKSLLARDLNLERDNQEQYTTIQIANMMEEKFPADSGLGKLIEFCEEVPALRKRAEILKKERSEVTGETSLEKNGQEAGPATPTSTTSHMLASERGETSATQEETSTAQAGTSTAQAGTSTAQAGTSTAQKRKSMREEETGVKKSKAAKEPDQPPCCEEPTAMCQSPILHSSSSASSNILSAKNQKSQPQNQNIPRGAVLHSEPLTVMVLTATDPFEYESPEHEVKNMFHATVATVSQYFHVKVFNIDLKEKFTKNNFITISNYFESKGILEINETSSVLEAAPKQMIEVPNCITRNANASPKICDIQKGTSGTVFYGVFTLHKKKVKTQNTSYEIKDGSGSIEVVGSGQWHNINCKEGDKLHLFCFHLKRERGQPKLVCGDHSFVKVTKAGKKKEASTVQ</sequence>
<dbReference type="EMBL" id="S62227">
    <property type="protein sequence ID" value="AAB26880.1"/>
    <property type="molecule type" value="mRNA"/>
</dbReference>
<dbReference type="EMBL" id="AK152621">
    <property type="protein sequence ID" value="BAE31364.1"/>
    <property type="status" value="ALT_INIT"/>
    <property type="molecule type" value="mRNA"/>
</dbReference>
<dbReference type="EMBL" id="AK080485">
    <property type="protein sequence ID" value="BAC37930.1"/>
    <property type="molecule type" value="mRNA"/>
</dbReference>
<dbReference type="EMBL" id="AK152683">
    <property type="protein sequence ID" value="BAE31415.1"/>
    <property type="molecule type" value="mRNA"/>
</dbReference>
<dbReference type="EMBL" id="AK152786">
    <property type="protein sequence ID" value="BAE31495.1"/>
    <property type="molecule type" value="mRNA"/>
</dbReference>
<dbReference type="EMBL" id="AK166217">
    <property type="protein sequence ID" value="BAE38635.1"/>
    <property type="molecule type" value="mRNA"/>
</dbReference>
<dbReference type="EMBL" id="BC132314">
    <property type="protein sequence ID" value="AAI32315.1"/>
    <property type="molecule type" value="mRNA"/>
</dbReference>
<dbReference type="EMBL" id="BC132316">
    <property type="protein sequence ID" value="AAI32317.1"/>
    <property type="molecule type" value="mRNA"/>
</dbReference>
<dbReference type="EMBL" id="BC145397">
    <property type="protein sequence ID" value="AAI45398.1"/>
    <property type="molecule type" value="mRNA"/>
</dbReference>
<dbReference type="CCDS" id="CCDS15532.1">
    <molecule id="P0DOV1-1"/>
</dbReference>
<dbReference type="RefSeq" id="NP_001028622.1">
    <molecule id="P0DOV1-1"/>
    <property type="nucleotide sequence ID" value="NM_001033450.4"/>
</dbReference>
<dbReference type="RefSeq" id="NP_001288674.1">
    <molecule id="P0DOV1-2"/>
    <property type="nucleotide sequence ID" value="NM_001301745.1"/>
</dbReference>
<dbReference type="PDB" id="2YU0">
    <property type="method" value="NMR"/>
    <property type="chains" value="A=8-88"/>
</dbReference>
<dbReference type="PDB" id="8IDX">
    <property type="method" value="X-ray"/>
    <property type="resolution" value="1.75 A"/>
    <property type="chains" value="A/B=213-425"/>
</dbReference>
<dbReference type="PDBsum" id="2YU0"/>
<dbReference type="PDBsum" id="8IDX"/>
<dbReference type="SMR" id="P0DOV1"/>
<dbReference type="FunCoup" id="P0DOV1">
    <property type="interactions" value="119"/>
</dbReference>
<dbReference type="STRING" id="10090.ENSMUSP00000009340"/>
<dbReference type="GlyGen" id="P0DOV1">
    <property type="glycosylation" value="1 site, 1 O-linked glycan (1 site)"/>
</dbReference>
<dbReference type="iPTMnet" id="P0DOV1"/>
<dbReference type="PhosphoSitePlus" id="P0DOV1"/>
<dbReference type="jPOST" id="P0DOV1"/>
<dbReference type="PaxDb" id="10090-ENSMUSP00000009340"/>
<dbReference type="ProteomicsDB" id="267272">
    <molecule id="P0DOV1-1"/>
</dbReference>
<dbReference type="ProteomicsDB" id="267273">
    <molecule id="P0DOV1-2"/>
</dbReference>
<dbReference type="Pumba" id="P0DOV1"/>
<dbReference type="Ensembl" id="ENSMUST00000009340.10">
    <molecule id="P0DOV1-1"/>
    <property type="protein sequence ID" value="ENSMUSP00000009340.9"/>
    <property type="gene ID" value="ENSMUSG00000026536.10"/>
</dbReference>
<dbReference type="GeneID" id="381308"/>
<dbReference type="KEGG" id="mmu:381308"/>
<dbReference type="AGR" id="MGI:3041120"/>
<dbReference type="CTD" id="381308"/>
<dbReference type="MGI" id="MGI:3041120">
    <property type="gene designation" value="Ifi211"/>
</dbReference>
<dbReference type="VEuPathDB" id="HostDB:ENSMUSG00000026536"/>
<dbReference type="eggNOG" id="ENOG502QTQS">
    <property type="taxonomic scope" value="Eukaryota"/>
</dbReference>
<dbReference type="GeneTree" id="ENSGT00390000013296"/>
<dbReference type="InParanoid" id="P0DOV1"/>
<dbReference type="OrthoDB" id="9836166at2759"/>
<dbReference type="PhylomeDB" id="P0DOV1"/>
<dbReference type="Reactome" id="R-MMU-6798695">
    <property type="pathway name" value="Neutrophil degranulation"/>
</dbReference>
<dbReference type="BioGRID-ORCS" id="381308">
    <property type="hits" value="2 hits in 44 CRISPR screens"/>
</dbReference>
<dbReference type="ChiTaRS" id="Ifi211">
    <property type="organism name" value="mouse"/>
</dbReference>
<dbReference type="EvolutionaryTrace" id="P0DOV1"/>
<dbReference type="PRO" id="PR:P0DOV1"/>
<dbReference type="Proteomes" id="UP000000589">
    <property type="component" value="Chromosome 1"/>
</dbReference>
<dbReference type="RNAct" id="P0DOV1">
    <property type="molecule type" value="protein"/>
</dbReference>
<dbReference type="Bgee" id="ENSMUSG00000026536">
    <property type="expression patterns" value="Expressed in zone of skin and 45 other cell types or tissues"/>
</dbReference>
<dbReference type="GO" id="GO:0034399">
    <property type="term" value="C:nuclear periphery"/>
    <property type="evidence" value="ECO:0000266"/>
    <property type="project" value="MGI"/>
</dbReference>
<dbReference type="GO" id="GO:0016607">
    <property type="term" value="C:nuclear speck"/>
    <property type="evidence" value="ECO:0000266"/>
    <property type="project" value="MGI"/>
</dbReference>
<dbReference type="GO" id="GO:0005634">
    <property type="term" value="C:nucleus"/>
    <property type="evidence" value="ECO:0000266"/>
    <property type="project" value="MGI"/>
</dbReference>
<dbReference type="GO" id="GO:0002218">
    <property type="term" value="P:activation of innate immune response"/>
    <property type="evidence" value="ECO:0007669"/>
    <property type="project" value="InterPro"/>
</dbReference>
<dbReference type="GO" id="GO:0035458">
    <property type="term" value="P:cellular response to interferon-beta"/>
    <property type="evidence" value="ECO:0007669"/>
    <property type="project" value="InterPro"/>
</dbReference>
<dbReference type="CDD" id="cd08305">
    <property type="entry name" value="Pyrin"/>
    <property type="match status" value="1"/>
</dbReference>
<dbReference type="FunFam" id="1.10.533.10:FF:000011">
    <property type="entry name" value="Myeloid cell nuclear differentiation antigen"/>
    <property type="match status" value="1"/>
</dbReference>
<dbReference type="FunFam" id="2.40.50.140:FF:000101">
    <property type="entry name" value="Myeloid cell nuclear differentiation antigen"/>
    <property type="match status" value="1"/>
</dbReference>
<dbReference type="FunFam" id="2.40.50.140:FF:000105">
    <property type="entry name" value="Myeloid cell nuclear differentiation antigen"/>
    <property type="match status" value="1"/>
</dbReference>
<dbReference type="Gene3D" id="1.10.533.10">
    <property type="entry name" value="Death Domain, Fas"/>
    <property type="match status" value="1"/>
</dbReference>
<dbReference type="Gene3D" id="2.40.50.140">
    <property type="entry name" value="Nucleic acid-binding proteins"/>
    <property type="match status" value="2"/>
</dbReference>
<dbReference type="InterPro" id="IPR004020">
    <property type="entry name" value="DAPIN"/>
</dbReference>
<dbReference type="InterPro" id="IPR011029">
    <property type="entry name" value="DEATH-like_dom_sf"/>
</dbReference>
<dbReference type="InterPro" id="IPR040205">
    <property type="entry name" value="HIN-200"/>
</dbReference>
<dbReference type="InterPro" id="IPR004021">
    <property type="entry name" value="HIN200/IF120x"/>
</dbReference>
<dbReference type="InterPro" id="IPR012340">
    <property type="entry name" value="NA-bd_OB-fold"/>
</dbReference>
<dbReference type="PANTHER" id="PTHR12200">
    <property type="entry name" value="INTERFERON-INDUCIBLE PROTEIN AIM2 FAMILY MEMBER"/>
    <property type="match status" value="1"/>
</dbReference>
<dbReference type="PANTHER" id="PTHR12200:SF25">
    <property type="entry name" value="PYRIN AND HIN DOMAIN-CONTAINING PROTEIN 1"/>
    <property type="match status" value="1"/>
</dbReference>
<dbReference type="Pfam" id="PF02760">
    <property type="entry name" value="HIN"/>
    <property type="match status" value="1"/>
</dbReference>
<dbReference type="Pfam" id="PF02758">
    <property type="entry name" value="PYRIN"/>
    <property type="match status" value="1"/>
</dbReference>
<dbReference type="SMART" id="SM01289">
    <property type="entry name" value="PYRIN"/>
    <property type="match status" value="1"/>
</dbReference>
<dbReference type="SUPFAM" id="SSF159141">
    <property type="entry name" value="HIN-2000 domain-like"/>
    <property type="match status" value="2"/>
</dbReference>
<dbReference type="PROSITE" id="PS50824">
    <property type="entry name" value="DAPIN"/>
    <property type="match status" value="1"/>
</dbReference>
<dbReference type="PROSITE" id="PS50834">
    <property type="entry name" value="HIN_200"/>
    <property type="match status" value="1"/>
</dbReference>
<gene>
    <name evidence="13" type="primary">Ifi211</name>
    <name evidence="13" type="synonym">Ifi205b</name>
    <name evidence="13" type="synonym">Mnda</name>
    <name evidence="8 9" type="synonym">p205</name>
</gene>
<proteinExistence type="evidence at protein level"/>
<comment type="function">
    <text evidence="5 6">Inhibits cell growth via p53/TP53 and RB1-dependent and independent pathways (PubMed:15342947, PubMed:16458891). May work in synergy with TP53 to promote the transcription of CDKN1A/P21 (PubMed:16458891).</text>
</comment>
<comment type="subunit">
    <text evidence="6">Interacts with HOXB2.</text>
</comment>
<comment type="subcellular location">
    <subcellularLocation>
        <location evidence="5">Nucleus</location>
    </subcellularLocation>
</comment>
<comment type="alternative products">
    <event type="alternative splicing"/>
    <isoform>
        <id>P0DOV1-1</id>
        <name>1</name>
        <sequence type="displayed"/>
    </isoform>
    <isoform>
        <id>P0DOV1-2</id>
        <name>2</name>
        <sequence type="described" ref="VSP_058589"/>
    </isoform>
</comment>
<comment type="tissue specificity">
    <text evidence="7">Mononuclear phagocytes.</text>
</comment>
<comment type="induction">
    <text evidence="7">By lipopolysaccharides (LPS).</text>
</comment>
<comment type="similarity">
    <text evidence="12">Belongs to the HIN-200 family.</text>
</comment>
<comment type="sequence caution" evidence="12">
    <conflict type="erroneous initiation">
        <sequence resource="EMBL-CDS" id="BAE31364"/>
    </conflict>
    <text>Truncated N-terminus.</text>
</comment>